<sequence>MNGAAYLSIIRPVNAVVAGLAGILASIIATGSIPAEFFWIFCIVLTITGAGNVINDYYDKEIDAINQPDRPIPSGQIIPGHALMYAILLFLIGNGIAILFTPLPLAGIAMGNSVILWLYASFLKKTPLIGNISVSYLAASIFLFGGAIQGTQGIISVFPIAGATWGVMLARELIKDAEDMPGDNEHGARTFPLLYGIRATIYLALISATAGVLMSLLLYSRWGAFYLGAIILVDAIILFGAIRGMKATNSEEMIKAKSSKILKAGMFASLLVFLLSAVLL</sequence>
<accession>Q2FN44</accession>
<gene>
    <name type="ordered locus">Mhun_0625</name>
</gene>
<name>DGGGP_METHJ</name>
<proteinExistence type="inferred from homology"/>
<keyword id="KW-1003">Cell membrane</keyword>
<keyword id="KW-0444">Lipid biosynthesis</keyword>
<keyword id="KW-0443">Lipid metabolism</keyword>
<keyword id="KW-0460">Magnesium</keyword>
<keyword id="KW-0472">Membrane</keyword>
<keyword id="KW-0594">Phospholipid biosynthesis</keyword>
<keyword id="KW-1208">Phospholipid metabolism</keyword>
<keyword id="KW-1185">Reference proteome</keyword>
<keyword id="KW-0808">Transferase</keyword>
<keyword id="KW-0812">Transmembrane</keyword>
<keyword id="KW-1133">Transmembrane helix</keyword>
<feature type="chain" id="PRO_0000350713" description="Digeranylgeranylglyceryl phosphate synthase">
    <location>
        <begin position="1"/>
        <end position="280"/>
    </location>
</feature>
<feature type="transmembrane region" description="Helical" evidence="1">
    <location>
        <begin position="4"/>
        <end position="24"/>
    </location>
</feature>
<feature type="transmembrane region" description="Helical" evidence="1">
    <location>
        <begin position="27"/>
        <end position="47"/>
    </location>
</feature>
<feature type="transmembrane region" description="Helical" evidence="1">
    <location>
        <begin position="83"/>
        <end position="103"/>
    </location>
</feature>
<feature type="transmembrane region" description="Helical" evidence="1">
    <location>
        <begin position="104"/>
        <end position="124"/>
    </location>
</feature>
<feature type="transmembrane region" description="Helical" evidence="1">
    <location>
        <begin position="128"/>
        <end position="148"/>
    </location>
</feature>
<feature type="transmembrane region" description="Helical" evidence="1">
    <location>
        <begin position="150"/>
        <end position="170"/>
    </location>
</feature>
<feature type="transmembrane region" description="Helical" evidence="1">
    <location>
        <begin position="199"/>
        <end position="219"/>
    </location>
</feature>
<feature type="transmembrane region" description="Helical" evidence="1">
    <location>
        <begin position="222"/>
        <end position="242"/>
    </location>
</feature>
<feature type="transmembrane region" description="Helical" evidence="1">
    <location>
        <begin position="260"/>
        <end position="280"/>
    </location>
</feature>
<evidence type="ECO:0000255" key="1">
    <source>
        <dbReference type="HAMAP-Rule" id="MF_01286"/>
    </source>
</evidence>
<comment type="function">
    <text evidence="1">Prenyltransferase that catalyzes the transfer of the geranylgeranyl moiety of geranylgeranyl diphosphate (GGPP) to the C2 hydroxyl of (S)-3-O-geranylgeranylglyceryl phosphate (GGGP). This reaction is the second ether-bond-formation step in the biosynthesis of archaeal membrane lipids.</text>
</comment>
<comment type="catalytic activity">
    <reaction evidence="1">
        <text>sn-3-O-(geranylgeranyl)glycerol 1-phosphate + (2E,6E,10E)-geranylgeranyl diphosphate = 2,3-bis-O-(geranylgeranyl)-sn-glycerol 1-phosphate + diphosphate</text>
        <dbReference type="Rhea" id="RHEA:18109"/>
        <dbReference type="ChEBI" id="CHEBI:33019"/>
        <dbReference type="ChEBI" id="CHEBI:57677"/>
        <dbReference type="ChEBI" id="CHEBI:58756"/>
        <dbReference type="ChEBI" id="CHEBI:58837"/>
        <dbReference type="EC" id="2.5.1.42"/>
    </reaction>
</comment>
<comment type="cofactor">
    <cofactor evidence="1">
        <name>Mg(2+)</name>
        <dbReference type="ChEBI" id="CHEBI:18420"/>
    </cofactor>
</comment>
<comment type="pathway">
    <text evidence="1">Membrane lipid metabolism; glycerophospholipid metabolism.</text>
</comment>
<comment type="subcellular location">
    <subcellularLocation>
        <location evidence="1">Cell membrane</location>
        <topology evidence="1">Multi-pass membrane protein</topology>
    </subcellularLocation>
</comment>
<comment type="similarity">
    <text evidence="1">Belongs to the UbiA prenyltransferase family. DGGGP synthase subfamily.</text>
</comment>
<dbReference type="EC" id="2.5.1.42" evidence="1"/>
<dbReference type="EMBL" id="CP000254">
    <property type="protein sequence ID" value="ABD40381.1"/>
    <property type="molecule type" value="Genomic_DNA"/>
</dbReference>
<dbReference type="RefSeq" id="WP_011447666.1">
    <property type="nucleotide sequence ID" value="NC_007796.1"/>
</dbReference>
<dbReference type="SMR" id="Q2FN44"/>
<dbReference type="FunCoup" id="Q2FN44">
    <property type="interactions" value="85"/>
</dbReference>
<dbReference type="STRING" id="323259.Mhun_0625"/>
<dbReference type="EnsemblBacteria" id="ABD40381">
    <property type="protein sequence ID" value="ABD40381"/>
    <property type="gene ID" value="Mhun_0625"/>
</dbReference>
<dbReference type="GeneID" id="3922938"/>
<dbReference type="KEGG" id="mhu:Mhun_0625"/>
<dbReference type="eggNOG" id="arCOG00476">
    <property type="taxonomic scope" value="Archaea"/>
</dbReference>
<dbReference type="HOGENOM" id="CLU_073311_1_1_2"/>
<dbReference type="InParanoid" id="Q2FN44"/>
<dbReference type="OrthoDB" id="11851at2157"/>
<dbReference type="UniPathway" id="UPA00940"/>
<dbReference type="Proteomes" id="UP000001941">
    <property type="component" value="Chromosome"/>
</dbReference>
<dbReference type="GO" id="GO:0005886">
    <property type="term" value="C:plasma membrane"/>
    <property type="evidence" value="ECO:0007669"/>
    <property type="project" value="UniProtKB-SubCell"/>
</dbReference>
<dbReference type="GO" id="GO:0047295">
    <property type="term" value="F:geranylgeranylglycerol-phosphate geranylgeranyltransferase activity"/>
    <property type="evidence" value="ECO:0007669"/>
    <property type="project" value="UniProtKB-UniRule"/>
</dbReference>
<dbReference type="GO" id="GO:0000287">
    <property type="term" value="F:magnesium ion binding"/>
    <property type="evidence" value="ECO:0007669"/>
    <property type="project" value="UniProtKB-UniRule"/>
</dbReference>
<dbReference type="GO" id="GO:0046474">
    <property type="term" value="P:glycerophospholipid biosynthetic process"/>
    <property type="evidence" value="ECO:0007669"/>
    <property type="project" value="UniProtKB-UniRule"/>
</dbReference>
<dbReference type="CDD" id="cd13961">
    <property type="entry name" value="PT_UbiA_DGGGPS"/>
    <property type="match status" value="1"/>
</dbReference>
<dbReference type="Gene3D" id="1.10.357.140">
    <property type="entry name" value="UbiA prenyltransferase"/>
    <property type="match status" value="1"/>
</dbReference>
<dbReference type="HAMAP" id="MF_01286">
    <property type="entry name" value="DGGGP_synth"/>
    <property type="match status" value="1"/>
</dbReference>
<dbReference type="InterPro" id="IPR023547">
    <property type="entry name" value="DGGGP_synth"/>
</dbReference>
<dbReference type="InterPro" id="IPR050475">
    <property type="entry name" value="Prenyltransferase_related"/>
</dbReference>
<dbReference type="InterPro" id="IPR000537">
    <property type="entry name" value="UbiA_prenyltransferase"/>
</dbReference>
<dbReference type="InterPro" id="IPR044878">
    <property type="entry name" value="UbiA_sf"/>
</dbReference>
<dbReference type="NCBIfam" id="NF009521">
    <property type="entry name" value="PRK12882.1"/>
    <property type="match status" value="1"/>
</dbReference>
<dbReference type="PANTHER" id="PTHR42723">
    <property type="entry name" value="CHLOROPHYLL SYNTHASE"/>
    <property type="match status" value="1"/>
</dbReference>
<dbReference type="PANTHER" id="PTHR42723:SF1">
    <property type="entry name" value="CHLOROPHYLL SYNTHASE, CHLOROPLASTIC"/>
    <property type="match status" value="1"/>
</dbReference>
<dbReference type="Pfam" id="PF01040">
    <property type="entry name" value="UbiA"/>
    <property type="match status" value="1"/>
</dbReference>
<protein>
    <recommendedName>
        <fullName evidence="1">Digeranylgeranylglyceryl phosphate synthase</fullName>
        <shortName evidence="1">DGGGP synthase</shortName>
        <shortName evidence="1">DGGGPS</shortName>
        <ecNumber evidence="1">2.5.1.42</ecNumber>
    </recommendedName>
    <alternativeName>
        <fullName evidence="1">(S)-2,3-di-O-geranylgeranylglyceryl phosphate synthase</fullName>
    </alternativeName>
    <alternativeName>
        <fullName evidence="1">Geranylgeranylglycerol-phosphate geranylgeranyltransferase</fullName>
    </alternativeName>
</protein>
<reference key="1">
    <citation type="journal article" date="2016" name="Stand. Genomic Sci.">
        <title>Complete genome sequence of Methanospirillum hungatei type strain JF1.</title>
        <authorList>
            <person name="Gunsalus R.P."/>
            <person name="Cook L.E."/>
            <person name="Crable B."/>
            <person name="Rohlin L."/>
            <person name="McDonald E."/>
            <person name="Mouttaki H."/>
            <person name="Sieber J.R."/>
            <person name="Poweleit N."/>
            <person name="Zhou H."/>
            <person name="Lapidus A.L."/>
            <person name="Daligault H.E."/>
            <person name="Land M."/>
            <person name="Gilna P."/>
            <person name="Ivanova N."/>
            <person name="Kyrpides N."/>
            <person name="Culley D.E."/>
            <person name="McInerney M.J."/>
        </authorList>
    </citation>
    <scope>NUCLEOTIDE SEQUENCE [LARGE SCALE GENOMIC DNA]</scope>
    <source>
        <strain>ATCC 27890 / DSM 864 / NBRC 100397 / JF-1</strain>
    </source>
</reference>
<organism>
    <name type="scientific">Methanospirillum hungatei JF-1 (strain ATCC 27890 / DSM 864 / NBRC 100397 / JF-1)</name>
    <dbReference type="NCBI Taxonomy" id="323259"/>
    <lineage>
        <taxon>Archaea</taxon>
        <taxon>Methanobacteriati</taxon>
        <taxon>Methanobacteriota</taxon>
        <taxon>Stenosarchaea group</taxon>
        <taxon>Methanomicrobia</taxon>
        <taxon>Methanomicrobiales</taxon>
        <taxon>Methanospirillaceae</taxon>
        <taxon>Methanospirillum</taxon>
    </lineage>
</organism>